<comment type="function">
    <text evidence="1">Orphan receptor. Probably involved in the function of nociceptive neurons. May regulate nociceptor function and/or development, including the sensation or modulation of pain. Potently activated by enkephalins (By similarity).</text>
</comment>
<comment type="subcellular location">
    <subcellularLocation>
        <location>Cell membrane</location>
        <topology>Multi-pass membrane protein</topology>
    </subcellularLocation>
</comment>
<comment type="tissue specificity">
    <text evidence="6">Uniquely localized in a subset of small dorsal root and trigeminal sensory neurons.</text>
</comment>
<comment type="similarity">
    <text evidence="3">Belongs to the G-protein coupled receptor 1 family. Mas subfamily.</text>
</comment>
<sequence>MDPTVPVFGTKLTPINGREETPCYNQTLSFTVLTCIISLVGLTGNAVVLWLLGYRMRRNAVSIYILNLAAADFLFLSFQIIRLPLRLINISHLIRKILVSVMTFPYFTGLSMLSAISTERCLSVLWPIWYRCRRPTHLSAVVCVLLWGLSLLFSMLEWRFCDFLFSGADSSWCETSDFIPVAWLIFLCVVLCVSSLVLLVRILCGSRKMPLTRLYVTILLTVLVFLLCGLPFGILGALIYRMHLNLEVLYCHVYLVCMSLSSLNSSANPIIYFFVGSFRQRQNRQNLKLVLQRALQDKPEVDKGEGQLPEESLELSGSRLGP</sequence>
<accession>Q96LA9</accession>
<accession>Q3KNU3</accession>
<accession>Q3KNU4</accession>
<accession>Q502W0</accession>
<accession>Q8TDD6</accession>
<accession>Q8TDD7</accession>
<feature type="chain" id="PRO_0000069783" description="Mas-related G-protein coupled receptor member X4">
    <location>
        <begin position="1"/>
        <end position="322"/>
    </location>
</feature>
<feature type="topological domain" description="Extracellular" evidence="2">
    <location>
        <begin position="1"/>
        <end position="31"/>
    </location>
</feature>
<feature type="transmembrane region" description="Helical; Name=1" evidence="2">
    <location>
        <begin position="32"/>
        <end position="52"/>
    </location>
</feature>
<feature type="topological domain" description="Cytoplasmic" evidence="2">
    <location>
        <begin position="53"/>
        <end position="60"/>
    </location>
</feature>
<feature type="transmembrane region" description="Helical; Name=2" evidence="2">
    <location>
        <begin position="61"/>
        <end position="81"/>
    </location>
</feature>
<feature type="topological domain" description="Extracellular" evidence="2">
    <location>
        <begin position="82"/>
        <end position="96"/>
    </location>
</feature>
<feature type="transmembrane region" description="Helical; Name=3" evidence="2">
    <location>
        <begin position="97"/>
        <end position="117"/>
    </location>
</feature>
<feature type="topological domain" description="Cytoplasmic" evidence="2">
    <location>
        <begin position="118"/>
        <end position="137"/>
    </location>
</feature>
<feature type="transmembrane region" description="Helical; Name=4" evidence="2">
    <location>
        <begin position="138"/>
        <end position="158"/>
    </location>
</feature>
<feature type="topological domain" description="Extracellular" evidence="2">
    <location>
        <begin position="159"/>
        <end position="177"/>
    </location>
</feature>
<feature type="transmembrane region" description="Helical; Name=5" evidence="2">
    <location>
        <begin position="178"/>
        <end position="198"/>
    </location>
</feature>
<feature type="topological domain" description="Cytoplasmic" evidence="2">
    <location>
        <begin position="199"/>
        <end position="218"/>
    </location>
</feature>
<feature type="transmembrane region" description="Helical; Name=6" evidence="2">
    <location>
        <begin position="219"/>
        <end position="239"/>
    </location>
</feature>
<feature type="topological domain" description="Extracellular" evidence="2">
    <location>
        <begin position="240"/>
        <end position="254"/>
    </location>
</feature>
<feature type="transmembrane region" description="Helical; Name=7" evidence="2">
    <location>
        <begin position="255"/>
        <end position="275"/>
    </location>
</feature>
<feature type="topological domain" description="Cytoplasmic" evidence="2">
    <location>
        <begin position="276"/>
        <end position="322"/>
    </location>
</feature>
<feature type="region of interest" description="Disordered" evidence="4">
    <location>
        <begin position="299"/>
        <end position="322"/>
    </location>
</feature>
<feature type="glycosylation site" description="N-linked (GlcNAc...) asparagine" evidence="2">
    <location>
        <position position="25"/>
    </location>
</feature>
<feature type="glycosylation site" description="N-linked (GlcNAc...) asparagine" evidence="2">
    <location>
        <position position="89"/>
    </location>
</feature>
<feature type="sequence variant" id="VAR_019435" description="In dbSNP:rs2468774." evidence="6">
    <original>F</original>
    <variation>L</variation>
    <location>
        <position position="8"/>
    </location>
</feature>
<feature type="sequence variant" id="VAR_019436" description="In dbSNP:rs2445180." evidence="6">
    <original>N</original>
    <variation>K</variation>
    <location>
        <position position="25"/>
    </location>
</feature>
<feature type="sequence variant" id="VAR_019437" description="In dbSNP:rs1869788." evidence="6">
    <original>Y</original>
    <variation>C</variation>
    <location>
        <position position="54"/>
    </location>
</feature>
<feature type="sequence variant" id="VAR_019438" description="In dbSNP:rs2445179." evidence="5 6 7">
    <original>L</original>
    <variation>S</variation>
    <location>
        <position position="83"/>
    </location>
</feature>
<feature type="sequence variant" id="VAR_025506" description="In dbSNP:rs11024532." evidence="6 7">
    <original>A</original>
    <variation>V</variation>
    <location>
        <position position="182"/>
    </location>
</feature>
<feature type="sequence variant" id="VAR_049419" description="In dbSNP:rs7102322.">
    <original>N</original>
    <variation>S</variation>
    <location>
        <position position="245"/>
    </location>
</feature>
<feature type="sequence conflict" description="In Ref. 2; AAL86882." evidence="8" ref="2">
    <original>S</original>
    <variation>R</variation>
    <location>
        <position position="318"/>
    </location>
</feature>
<feature type="sequence conflict" description="In Ref. 2; AAL86883." evidence="8" ref="2">
    <original>R</original>
    <variation>K</variation>
    <location>
        <position position="319"/>
    </location>
</feature>
<feature type="strand" evidence="11">
    <location>
        <begin position="24"/>
        <end position="26"/>
    </location>
</feature>
<feature type="helix" evidence="9">
    <location>
        <begin position="27"/>
        <end position="51"/>
    </location>
</feature>
<feature type="turn" evidence="9">
    <location>
        <begin position="52"/>
        <end position="55"/>
    </location>
</feature>
<feature type="helix" evidence="9">
    <location>
        <begin position="62"/>
        <end position="85"/>
    </location>
</feature>
<feature type="strand" evidence="10">
    <location>
        <begin position="87"/>
        <end position="89"/>
    </location>
</feature>
<feature type="helix" evidence="9">
    <location>
        <begin position="92"/>
        <end position="109"/>
    </location>
</feature>
<feature type="strand" evidence="9">
    <location>
        <begin position="110"/>
        <end position="112"/>
    </location>
</feature>
<feature type="helix" evidence="9">
    <location>
        <begin position="113"/>
        <end position="125"/>
    </location>
</feature>
<feature type="helix" evidence="9">
    <location>
        <begin position="127"/>
        <end position="132"/>
    </location>
</feature>
<feature type="helix" evidence="9">
    <location>
        <begin position="138"/>
        <end position="154"/>
    </location>
</feature>
<feature type="strand" evidence="9">
    <location>
        <begin position="157"/>
        <end position="159"/>
    </location>
</feature>
<feature type="turn" evidence="9">
    <location>
        <begin position="173"/>
        <end position="175"/>
    </location>
</feature>
<feature type="helix" evidence="9">
    <location>
        <begin position="176"/>
        <end position="178"/>
    </location>
</feature>
<feature type="helix" evidence="9">
    <location>
        <begin position="179"/>
        <end position="203"/>
    </location>
</feature>
<feature type="strand" evidence="9">
    <location>
        <begin position="204"/>
        <end position="206"/>
    </location>
</feature>
<feature type="helix" evidence="9">
    <location>
        <begin position="209"/>
        <end position="211"/>
    </location>
</feature>
<feature type="helix" evidence="9">
    <location>
        <begin position="212"/>
        <end position="228"/>
    </location>
</feature>
<feature type="helix" evidence="9">
    <location>
        <begin position="231"/>
        <end position="235"/>
    </location>
</feature>
<feature type="turn" evidence="9">
    <location>
        <begin position="239"/>
        <end position="241"/>
    </location>
</feature>
<feature type="helix" evidence="9">
    <location>
        <begin position="249"/>
        <end position="266"/>
    </location>
</feature>
<feature type="helix" evidence="9">
    <location>
        <begin position="268"/>
        <end position="272"/>
    </location>
</feature>
<feature type="helix" evidence="9">
    <location>
        <begin position="274"/>
        <end position="279"/>
    </location>
</feature>
<reference key="1">
    <citation type="journal article" date="2001" name="Cell">
        <title>A diverse family of GPCRs expressed in specific subsets of nociceptive sensory neurons.</title>
        <authorList>
            <person name="Dong X."/>
            <person name="Han S.-K."/>
            <person name="Zylka M.J."/>
            <person name="Simon M.I."/>
            <person name="Anderson D.J."/>
        </authorList>
    </citation>
    <scope>NUCLEOTIDE SEQUENCE [GENOMIC DNA]</scope>
    <scope>VARIANT SER-83</scope>
</reference>
<reference key="2">
    <citation type="journal article" date="2002" name="Nat. Neurosci.">
        <title>Proenkephalin A gene products activate a new family of sensory neuron-specific GPCRs.</title>
        <authorList>
            <person name="Lembo P.M.C."/>
            <person name="Grazzini E."/>
            <person name="Groblewski T."/>
            <person name="O'Donnell D."/>
            <person name="Roy M.-O."/>
            <person name="Zhang J."/>
            <person name="Hoffert C."/>
            <person name="Cao J."/>
            <person name="Schmidt R."/>
            <person name="Pelletier M."/>
            <person name="Labarre M."/>
            <person name="Gosselin M."/>
            <person name="Fortin Y."/>
            <person name="Banville D."/>
            <person name="Shen S."/>
            <person name="Stroem P."/>
            <person name="Payza K."/>
            <person name="Dray A."/>
            <person name="Walker P."/>
            <person name="Ahmad S."/>
        </authorList>
    </citation>
    <scope>NUCLEOTIDE SEQUENCE [GENOMIC DNA]</scope>
    <scope>VARIANTS LEU-8; LYS-25; CYS-54; SER-83 AND VAL-182</scope>
    <scope>TISSUE SPECIFICITY</scope>
</reference>
<reference key="3">
    <citation type="journal article" date="2006" name="Nature">
        <title>Human chromosome 11 DNA sequence and analysis including novel gene identification.</title>
        <authorList>
            <person name="Taylor T.D."/>
            <person name="Noguchi H."/>
            <person name="Totoki Y."/>
            <person name="Toyoda A."/>
            <person name="Kuroki Y."/>
            <person name="Dewar K."/>
            <person name="Lloyd C."/>
            <person name="Itoh T."/>
            <person name="Takeda T."/>
            <person name="Kim D.-W."/>
            <person name="She X."/>
            <person name="Barlow K.F."/>
            <person name="Bloom T."/>
            <person name="Bruford E."/>
            <person name="Chang J.L."/>
            <person name="Cuomo C.A."/>
            <person name="Eichler E."/>
            <person name="FitzGerald M.G."/>
            <person name="Jaffe D.B."/>
            <person name="LaButti K."/>
            <person name="Nicol R."/>
            <person name="Park H.-S."/>
            <person name="Seaman C."/>
            <person name="Sougnez C."/>
            <person name="Yang X."/>
            <person name="Zimmer A.R."/>
            <person name="Zody M.C."/>
            <person name="Birren B.W."/>
            <person name="Nusbaum C."/>
            <person name="Fujiyama A."/>
            <person name="Hattori M."/>
            <person name="Rogers J."/>
            <person name="Lander E.S."/>
            <person name="Sakaki Y."/>
        </authorList>
    </citation>
    <scope>NUCLEOTIDE SEQUENCE [LARGE SCALE GENOMIC DNA]</scope>
</reference>
<reference key="4">
    <citation type="journal article" date="2004" name="Genome Res.">
        <title>The status, quality, and expansion of the NIH full-length cDNA project: the Mammalian Gene Collection (MGC).</title>
        <authorList>
            <consortium name="The MGC Project Team"/>
        </authorList>
    </citation>
    <scope>NUCLEOTIDE SEQUENCE [LARGE SCALE MRNA]</scope>
    <scope>VARIANTS SER-83 AND VAL-182</scope>
</reference>
<protein>
    <recommendedName>
        <fullName>Mas-related G-protein coupled receptor member X4</fullName>
    </recommendedName>
    <alternativeName>
        <fullName>Sensory neuron-specific G-protein coupled receptor 5/6</fullName>
    </alternativeName>
</protein>
<evidence type="ECO:0000250" key="1"/>
<evidence type="ECO:0000255" key="2"/>
<evidence type="ECO:0000255" key="3">
    <source>
        <dbReference type="PROSITE-ProRule" id="PRU00521"/>
    </source>
</evidence>
<evidence type="ECO:0000256" key="4">
    <source>
        <dbReference type="SAM" id="MobiDB-lite"/>
    </source>
</evidence>
<evidence type="ECO:0000269" key="5">
    <source>
    </source>
</evidence>
<evidence type="ECO:0000269" key="6">
    <source>
    </source>
</evidence>
<evidence type="ECO:0000269" key="7">
    <source>
    </source>
</evidence>
<evidence type="ECO:0000305" key="8"/>
<evidence type="ECO:0007829" key="9">
    <source>
        <dbReference type="PDB" id="7S8P"/>
    </source>
</evidence>
<evidence type="ECO:0007829" key="10">
    <source>
        <dbReference type="PDB" id="8K4S"/>
    </source>
</evidence>
<evidence type="ECO:0007829" key="11">
    <source>
        <dbReference type="PDB" id="8KEX"/>
    </source>
</evidence>
<dbReference type="EMBL" id="AY042216">
    <property type="protein sequence ID" value="AAK91807.1"/>
    <property type="molecule type" value="Genomic_DNA"/>
</dbReference>
<dbReference type="EMBL" id="AF474991">
    <property type="protein sequence ID" value="AAL86882.1"/>
    <property type="molecule type" value="Genomic_DNA"/>
</dbReference>
<dbReference type="EMBL" id="AF474992">
    <property type="protein sequence ID" value="AAL86883.1"/>
    <property type="molecule type" value="Genomic_DNA"/>
</dbReference>
<dbReference type="EMBL" id="AC090099">
    <property type="status" value="NOT_ANNOTATED_CDS"/>
    <property type="molecule type" value="Genomic_DNA"/>
</dbReference>
<dbReference type="EMBL" id="BC095509">
    <property type="protein sequence ID" value="AAH95509.1"/>
    <property type="molecule type" value="mRNA"/>
</dbReference>
<dbReference type="EMBL" id="BC107099">
    <property type="protein sequence ID" value="AAI07100.1"/>
    <property type="molecule type" value="mRNA"/>
</dbReference>
<dbReference type="EMBL" id="BC107100">
    <property type="protein sequence ID" value="AAI07101.1"/>
    <property type="molecule type" value="mRNA"/>
</dbReference>
<dbReference type="CCDS" id="CCDS7831.1"/>
<dbReference type="RefSeq" id="NP_473373.2">
    <property type="nucleotide sequence ID" value="NM_054032.3"/>
</dbReference>
<dbReference type="PDB" id="7S8P">
    <property type="method" value="EM"/>
    <property type="resolution" value="2.60 A"/>
    <property type="chains" value="R=2-322"/>
</dbReference>
<dbReference type="PDB" id="8K4S">
    <property type="method" value="EM"/>
    <property type="resolution" value="2.90 A"/>
    <property type="chains" value="E=1-322"/>
</dbReference>
<dbReference type="PDB" id="8KEX">
    <property type="method" value="EM"/>
    <property type="resolution" value="3.20 A"/>
    <property type="chains" value="E=1-322"/>
</dbReference>
<dbReference type="PDB" id="8YRG">
    <property type="method" value="EM"/>
    <property type="resolution" value="3.14 A"/>
    <property type="chains" value="R=2-322"/>
</dbReference>
<dbReference type="PDBsum" id="7S8P"/>
<dbReference type="PDBsum" id="8K4S"/>
<dbReference type="PDBsum" id="8KEX"/>
<dbReference type="PDBsum" id="8YRG"/>
<dbReference type="EMDB" id="EMD-24900"/>
<dbReference type="EMDB" id="EMD-39542"/>
<dbReference type="SMR" id="Q96LA9"/>
<dbReference type="BioGRID" id="125577">
    <property type="interactions" value="9"/>
</dbReference>
<dbReference type="FunCoup" id="Q96LA9">
    <property type="interactions" value="62"/>
</dbReference>
<dbReference type="IntAct" id="Q96LA9">
    <property type="interactions" value="5"/>
</dbReference>
<dbReference type="STRING" id="9606.ENSP00000314042"/>
<dbReference type="ChEMBL" id="CHEMBL4523430"/>
<dbReference type="GlyCosmos" id="Q96LA9">
    <property type="glycosylation" value="2 sites, No reported glycans"/>
</dbReference>
<dbReference type="GlyGen" id="Q96LA9">
    <property type="glycosylation" value="2 sites"/>
</dbReference>
<dbReference type="BioMuta" id="MRGPRX4"/>
<dbReference type="DMDM" id="322510048"/>
<dbReference type="MassIVE" id="Q96LA9"/>
<dbReference type="PaxDb" id="9606-ENSP00000314042"/>
<dbReference type="Antibodypedia" id="24983">
    <property type="antibodies" value="107 antibodies from 25 providers"/>
</dbReference>
<dbReference type="DNASU" id="117196"/>
<dbReference type="Ensembl" id="ENST00000314254.3">
    <property type="protein sequence ID" value="ENSP00000314042.3"/>
    <property type="gene ID" value="ENSG00000179817.5"/>
</dbReference>
<dbReference type="GeneID" id="117196"/>
<dbReference type="KEGG" id="hsa:117196"/>
<dbReference type="MANE-Select" id="ENST00000314254.3">
    <property type="protein sequence ID" value="ENSP00000314042.3"/>
    <property type="RefSeq nucleotide sequence ID" value="NM_054032.3"/>
    <property type="RefSeq protein sequence ID" value="NP_473373.2"/>
</dbReference>
<dbReference type="UCSC" id="uc001mnv.1">
    <property type="organism name" value="human"/>
</dbReference>
<dbReference type="AGR" id="HGNC:17617"/>
<dbReference type="CTD" id="117196"/>
<dbReference type="DisGeNET" id="117196"/>
<dbReference type="GeneCards" id="MRGPRX4"/>
<dbReference type="HGNC" id="HGNC:17617">
    <property type="gene designation" value="MRGPRX4"/>
</dbReference>
<dbReference type="HPA" id="ENSG00000179817">
    <property type="expression patterns" value="Not detected"/>
</dbReference>
<dbReference type="MIM" id="607230">
    <property type="type" value="gene"/>
</dbReference>
<dbReference type="neXtProt" id="NX_Q96LA9"/>
<dbReference type="OpenTargets" id="ENSG00000179817"/>
<dbReference type="PharmGKB" id="PA142671337"/>
<dbReference type="VEuPathDB" id="HostDB:ENSG00000179817"/>
<dbReference type="eggNOG" id="ENOG502RTWA">
    <property type="taxonomic scope" value="Eukaryota"/>
</dbReference>
<dbReference type="GeneTree" id="ENSGT01030000234639"/>
<dbReference type="InParanoid" id="Q96LA9"/>
<dbReference type="OMA" id="EVLYCHV"/>
<dbReference type="OrthoDB" id="9535517at2759"/>
<dbReference type="PAN-GO" id="Q96LA9">
    <property type="GO annotations" value="2 GO annotations based on evolutionary models"/>
</dbReference>
<dbReference type="PhylomeDB" id="Q96LA9"/>
<dbReference type="TreeFam" id="TF336336"/>
<dbReference type="PathwayCommons" id="Q96LA9"/>
<dbReference type="BioGRID-ORCS" id="117196">
    <property type="hits" value="9 hits in 1099 CRISPR screens"/>
</dbReference>
<dbReference type="ChiTaRS" id="MRGPRX4">
    <property type="organism name" value="human"/>
</dbReference>
<dbReference type="GeneWiki" id="MRGPRX4"/>
<dbReference type="GenomeRNAi" id="117196"/>
<dbReference type="Pharos" id="Q96LA9">
    <property type="development level" value="Tchem"/>
</dbReference>
<dbReference type="PRO" id="PR:Q96LA9"/>
<dbReference type="Proteomes" id="UP000005640">
    <property type="component" value="Chromosome 11"/>
</dbReference>
<dbReference type="RNAct" id="Q96LA9">
    <property type="molecule type" value="protein"/>
</dbReference>
<dbReference type="Bgee" id="ENSG00000179817">
    <property type="expression patterns" value="Expressed in upper leg skin and 2 other cell types or tissues"/>
</dbReference>
<dbReference type="GO" id="GO:0005886">
    <property type="term" value="C:plasma membrane"/>
    <property type="evidence" value="ECO:0000318"/>
    <property type="project" value="GO_Central"/>
</dbReference>
<dbReference type="GO" id="GO:0004930">
    <property type="term" value="F:G protein-coupled receptor activity"/>
    <property type="evidence" value="ECO:0000318"/>
    <property type="project" value="GO_Central"/>
</dbReference>
<dbReference type="GO" id="GO:0007186">
    <property type="term" value="P:G protein-coupled receptor signaling pathway"/>
    <property type="evidence" value="ECO:0000318"/>
    <property type="project" value="GO_Central"/>
</dbReference>
<dbReference type="CDD" id="cd15106">
    <property type="entry name" value="7tmA_MrgprX-like"/>
    <property type="match status" value="1"/>
</dbReference>
<dbReference type="FunFam" id="1.20.1070.10:FF:000140">
    <property type="entry name" value="Mas-related G-protein coupled receptor member X2"/>
    <property type="match status" value="1"/>
</dbReference>
<dbReference type="Gene3D" id="1.20.1070.10">
    <property type="entry name" value="Rhodopsin 7-helix transmembrane proteins"/>
    <property type="match status" value="1"/>
</dbReference>
<dbReference type="InterPro" id="IPR000276">
    <property type="entry name" value="GPCR_Rhodpsn"/>
</dbReference>
<dbReference type="InterPro" id="IPR017452">
    <property type="entry name" value="GPCR_Rhodpsn_7TM"/>
</dbReference>
<dbReference type="InterPro" id="IPR026234">
    <property type="entry name" value="MRGPCRFAMILY"/>
</dbReference>
<dbReference type="PANTHER" id="PTHR11334">
    <property type="entry name" value="MAS-RELATED G-PROTEIN COUPLED RECEPTOR"/>
    <property type="match status" value="1"/>
</dbReference>
<dbReference type="PANTHER" id="PTHR11334:SF59">
    <property type="entry name" value="MAS-RELATED G-PROTEIN COUPLED RECEPTOR MEMBER X4"/>
    <property type="match status" value="1"/>
</dbReference>
<dbReference type="Pfam" id="PF00001">
    <property type="entry name" value="7tm_1"/>
    <property type="match status" value="1"/>
</dbReference>
<dbReference type="PRINTS" id="PR00237">
    <property type="entry name" value="GPCRRHODOPSN"/>
</dbReference>
<dbReference type="PRINTS" id="PR02108">
    <property type="entry name" value="MRGPCRFAMILY"/>
</dbReference>
<dbReference type="SUPFAM" id="SSF81321">
    <property type="entry name" value="Family A G protein-coupled receptor-like"/>
    <property type="match status" value="1"/>
</dbReference>
<dbReference type="PROSITE" id="PS00237">
    <property type="entry name" value="G_PROTEIN_RECEP_F1_1"/>
    <property type="match status" value="1"/>
</dbReference>
<dbReference type="PROSITE" id="PS50262">
    <property type="entry name" value="G_PROTEIN_RECEP_F1_2"/>
    <property type="match status" value="1"/>
</dbReference>
<keyword id="KW-0002">3D-structure</keyword>
<keyword id="KW-1003">Cell membrane</keyword>
<keyword id="KW-0297">G-protein coupled receptor</keyword>
<keyword id="KW-0325">Glycoprotein</keyword>
<keyword id="KW-0472">Membrane</keyword>
<keyword id="KW-0675">Receptor</keyword>
<keyword id="KW-1185">Reference proteome</keyword>
<keyword id="KW-0807">Transducer</keyword>
<keyword id="KW-0812">Transmembrane</keyword>
<keyword id="KW-1133">Transmembrane helix</keyword>
<name>MRGX4_HUMAN</name>
<gene>
    <name type="primary">MRGPRX4</name>
    <name type="synonym">MRGX4</name>
    <name type="synonym">SNSR5</name>
    <name type="synonym">SNSR6</name>
</gene>
<proteinExistence type="evidence at protein level"/>
<organism>
    <name type="scientific">Homo sapiens</name>
    <name type="common">Human</name>
    <dbReference type="NCBI Taxonomy" id="9606"/>
    <lineage>
        <taxon>Eukaryota</taxon>
        <taxon>Metazoa</taxon>
        <taxon>Chordata</taxon>
        <taxon>Craniata</taxon>
        <taxon>Vertebrata</taxon>
        <taxon>Euteleostomi</taxon>
        <taxon>Mammalia</taxon>
        <taxon>Eutheria</taxon>
        <taxon>Euarchontoglires</taxon>
        <taxon>Primates</taxon>
        <taxon>Haplorrhini</taxon>
        <taxon>Catarrhini</taxon>
        <taxon>Hominidae</taxon>
        <taxon>Homo</taxon>
    </lineage>
</organism>